<comment type="function">
    <text evidence="1">Flagellum-specific muramidase which hydrolyzes the peptidoglycan layer to assemble the rod structure in the periplasmic space.</text>
</comment>
<comment type="subcellular location">
    <subcellularLocation>
        <location evidence="1">Periplasm</location>
    </subcellularLocation>
</comment>
<comment type="miscellaneous">
    <text>Probably exported via the flagellum-specific export pathway.</text>
</comment>
<comment type="similarity">
    <text evidence="3">In the N-terminal section; belongs to the FlgJ family.</text>
</comment>
<comment type="similarity">
    <text evidence="3">In the C-terminal section; belongs to the glycosyl hydrolase 73 family.</text>
</comment>
<evidence type="ECO:0000250" key="1"/>
<evidence type="ECO:0000255" key="2"/>
<evidence type="ECO:0000305" key="3"/>
<proteinExistence type="inferred from homology"/>
<name>FLGJ_VIBCH</name>
<sequence>MINNSNDIGFIQDIAGLDKLRQKAVNGDENAGQSALTAAARQFESIFTSMMLKSMRDANSDFKSDLMSSQNEDLYRQMLDEQMASEFSSSGSLGLADMIVAQLSTGQTASEQKGEDGFQEAMRRVEHARKTASERSNEDLVAAVYPLRKTQAVQSTQFDSRHSFVTKLKPYADKAARMLGVDSSLLIAQAALETGWGQKMVKNARGNSNNLFNIKADRSWQGDKVATQTLEYHNNVPVVEKAAFRSYASFDESFNDYVRFLENNPRYTNALDHGGNSERFIHGIHRAGYATDPQYADKVLRVKAQIDQMNLYKSPAGIFRRHSFSSSIFSAYQS</sequence>
<protein>
    <recommendedName>
        <fullName>Peptidoglycan hydrolase FlgJ</fullName>
        <ecNumber>3.2.1.-</ecNumber>
    </recommendedName>
    <alternativeName>
        <fullName>Muramidase FlgJ</fullName>
    </alternativeName>
</protein>
<reference key="1">
    <citation type="journal article" date="1998" name="FEMS Microbiol. Lett.">
        <title>Cloning, sequencing and expression of the flagellin core protein and other genes encoding structural proteins of the Vibrio cholerae flagellum.</title>
        <authorList>
            <person name="Das M."/>
            <person name="Chopra A.K."/>
            <person name="Wood T."/>
            <person name="Peterson J.W."/>
        </authorList>
    </citation>
    <scope>NUCLEOTIDE SEQUENCE [GENOMIC DNA]</scope>
    <source>
        <strain>El Tor Inaba V86</strain>
    </source>
</reference>
<reference key="2">
    <citation type="journal article" date="2000" name="Nature">
        <title>DNA sequence of both chromosomes of the cholera pathogen Vibrio cholerae.</title>
        <authorList>
            <person name="Heidelberg J.F."/>
            <person name="Eisen J.A."/>
            <person name="Nelson W.C."/>
            <person name="Clayton R.A."/>
            <person name="Gwinn M.L."/>
            <person name="Dodson R.J."/>
            <person name="Haft D.H."/>
            <person name="Hickey E.K."/>
            <person name="Peterson J.D."/>
            <person name="Umayam L.A."/>
            <person name="Gill S.R."/>
            <person name="Nelson K.E."/>
            <person name="Read T.D."/>
            <person name="Tettelin H."/>
            <person name="Richardson D.L."/>
            <person name="Ermolaeva M.D."/>
            <person name="Vamathevan J.J."/>
            <person name="Bass S."/>
            <person name="Qin H."/>
            <person name="Dragoi I."/>
            <person name="Sellers P."/>
            <person name="McDonald L.A."/>
            <person name="Utterback T.R."/>
            <person name="Fleischmann R.D."/>
            <person name="Nierman W.C."/>
            <person name="White O."/>
            <person name="Salzberg S.L."/>
            <person name="Smith H.O."/>
            <person name="Colwell R.R."/>
            <person name="Mekalanos J.J."/>
            <person name="Venter J.C."/>
            <person name="Fraser C.M."/>
        </authorList>
    </citation>
    <scope>NUCLEOTIDE SEQUENCE [LARGE SCALE GENOMIC DNA]</scope>
    <source>
        <strain>ATCC 39315 / El Tor Inaba N16961</strain>
    </source>
</reference>
<gene>
    <name type="primary">flgJ</name>
    <name type="ordered locus">VC_2192</name>
</gene>
<keyword id="KW-1005">Bacterial flagellum biogenesis</keyword>
<keyword id="KW-0961">Cell wall biogenesis/degradation</keyword>
<keyword id="KW-0326">Glycosidase</keyword>
<keyword id="KW-0378">Hydrolase</keyword>
<keyword id="KW-0574">Periplasm</keyword>
<keyword id="KW-1185">Reference proteome</keyword>
<dbReference type="EC" id="3.2.1.-"/>
<dbReference type="EMBL" id="AF019213">
    <property type="protein sequence ID" value="AAC33157.1"/>
    <property type="molecule type" value="Genomic_DNA"/>
</dbReference>
<dbReference type="EMBL" id="AE003852">
    <property type="protein sequence ID" value="AAF95337.1"/>
    <property type="molecule type" value="Genomic_DNA"/>
</dbReference>
<dbReference type="PIR" id="G82105">
    <property type="entry name" value="G82105"/>
</dbReference>
<dbReference type="RefSeq" id="NP_231823.1">
    <property type="nucleotide sequence ID" value="NC_002505.1"/>
</dbReference>
<dbReference type="SMR" id="Q9KQ15"/>
<dbReference type="STRING" id="243277.VC_2192"/>
<dbReference type="CAZy" id="GH73">
    <property type="family name" value="Glycoside Hydrolase Family 73"/>
</dbReference>
<dbReference type="DNASU" id="2613232"/>
<dbReference type="EnsemblBacteria" id="AAF95337">
    <property type="protein sequence ID" value="AAF95337"/>
    <property type="gene ID" value="VC_2192"/>
</dbReference>
<dbReference type="KEGG" id="vch:VC_2192"/>
<dbReference type="PATRIC" id="fig|243277.26.peg.2089"/>
<dbReference type="eggNOG" id="COG1705">
    <property type="taxonomic scope" value="Bacteria"/>
</dbReference>
<dbReference type="eggNOG" id="COG3951">
    <property type="taxonomic scope" value="Bacteria"/>
</dbReference>
<dbReference type="HOGENOM" id="CLU_013771_3_0_6"/>
<dbReference type="Proteomes" id="UP000000584">
    <property type="component" value="Chromosome 1"/>
</dbReference>
<dbReference type="GO" id="GO:0042597">
    <property type="term" value="C:periplasmic space"/>
    <property type="evidence" value="ECO:0007669"/>
    <property type="project" value="UniProtKB-SubCell"/>
</dbReference>
<dbReference type="GO" id="GO:0004040">
    <property type="term" value="F:amidase activity"/>
    <property type="evidence" value="ECO:0007669"/>
    <property type="project" value="InterPro"/>
</dbReference>
<dbReference type="GO" id="GO:0016798">
    <property type="term" value="F:hydrolase activity, acting on glycosyl bonds"/>
    <property type="evidence" value="ECO:0007669"/>
    <property type="project" value="UniProtKB-KW"/>
</dbReference>
<dbReference type="GO" id="GO:0044780">
    <property type="term" value="P:bacterial-type flagellum assembly"/>
    <property type="evidence" value="ECO:0007669"/>
    <property type="project" value="InterPro"/>
</dbReference>
<dbReference type="GO" id="GO:0071973">
    <property type="term" value="P:bacterial-type flagellum-dependent cell motility"/>
    <property type="evidence" value="ECO:0000318"/>
    <property type="project" value="GO_Central"/>
</dbReference>
<dbReference type="GO" id="GO:0071555">
    <property type="term" value="P:cell wall organization"/>
    <property type="evidence" value="ECO:0007669"/>
    <property type="project" value="UniProtKB-KW"/>
</dbReference>
<dbReference type="FunFam" id="2.10.70.40:FF:000001">
    <property type="entry name" value="Flagellar assembly peptidoglycan hydrolase FlgJ"/>
    <property type="match status" value="1"/>
</dbReference>
<dbReference type="Gene3D" id="1.10.530.10">
    <property type="match status" value="1"/>
</dbReference>
<dbReference type="Gene3D" id="2.10.70.40">
    <property type="entry name" value="peptidoglycan hydrolase"/>
    <property type="match status" value="1"/>
</dbReference>
<dbReference type="InterPro" id="IPR019301">
    <property type="entry name" value="Flagellar_prot_FlgJ_N"/>
</dbReference>
<dbReference type="InterPro" id="IPR013377">
    <property type="entry name" value="FlgJ"/>
</dbReference>
<dbReference type="InterPro" id="IPR051056">
    <property type="entry name" value="Glycosyl_Hydrolase_73"/>
</dbReference>
<dbReference type="InterPro" id="IPR002901">
    <property type="entry name" value="MGlyc_endo_b_GlcNAc-like_dom"/>
</dbReference>
<dbReference type="NCBIfam" id="TIGR02541">
    <property type="entry name" value="flagell_FlgJ"/>
    <property type="match status" value="1"/>
</dbReference>
<dbReference type="PANTHER" id="PTHR33308">
    <property type="entry name" value="PEPTIDOGLYCAN HYDROLASE FLGJ"/>
    <property type="match status" value="1"/>
</dbReference>
<dbReference type="PANTHER" id="PTHR33308:SF9">
    <property type="entry name" value="PEPTIDOGLYCAN HYDROLASE FLGJ"/>
    <property type="match status" value="1"/>
</dbReference>
<dbReference type="Pfam" id="PF01832">
    <property type="entry name" value="Glucosaminidase"/>
    <property type="match status" value="1"/>
</dbReference>
<dbReference type="Pfam" id="PF10135">
    <property type="entry name" value="Rod-binding"/>
    <property type="match status" value="1"/>
</dbReference>
<dbReference type="PRINTS" id="PR01002">
    <property type="entry name" value="FLGFLGJ"/>
</dbReference>
<dbReference type="SMART" id="SM00047">
    <property type="entry name" value="LYZ2"/>
    <property type="match status" value="1"/>
</dbReference>
<organism>
    <name type="scientific">Vibrio cholerae serotype O1 (strain ATCC 39315 / El Tor Inaba N16961)</name>
    <dbReference type="NCBI Taxonomy" id="243277"/>
    <lineage>
        <taxon>Bacteria</taxon>
        <taxon>Pseudomonadati</taxon>
        <taxon>Pseudomonadota</taxon>
        <taxon>Gammaproteobacteria</taxon>
        <taxon>Vibrionales</taxon>
        <taxon>Vibrionaceae</taxon>
        <taxon>Vibrio</taxon>
    </lineage>
</organism>
<accession>Q9KQ15</accession>
<accession>O30855</accession>
<feature type="chain" id="PRO_0000165709" description="Peptidoglycan hydrolase FlgJ">
    <location>
        <begin position="1"/>
        <end position="334"/>
    </location>
</feature>
<feature type="region of interest" description="Catalytic">
    <location>
        <begin position="160"/>
        <end position="334"/>
    </location>
</feature>
<feature type="active site" evidence="2">
    <location>
        <position position="231"/>
    </location>
</feature>
<feature type="active site" evidence="2">
    <location>
        <position position="256"/>
    </location>
</feature>
<feature type="sequence conflict" description="In Ref. 1; AAC33157." evidence="3" ref="1">
    <original>S</original>
    <variation>C</variation>
    <location>
        <position position="90"/>
    </location>
</feature>
<feature type="sequence conflict" description="In Ref. 2; AAF95337." evidence="3" ref="2">
    <original>YKSPAGIFRRHSFSSSIFSAYQS</original>
    <variation>L</variation>
    <location>
        <begin position="312"/>
        <end position="334"/>
    </location>
</feature>